<keyword id="KW-0963">Cytoplasm</keyword>
<keyword id="KW-0444">Lipid biosynthesis</keyword>
<keyword id="KW-0443">Lipid metabolism</keyword>
<keyword id="KW-0594">Phospholipid biosynthesis</keyword>
<keyword id="KW-1208">Phospholipid metabolism</keyword>
<keyword id="KW-1185">Reference proteome</keyword>
<keyword id="KW-0808">Transferase</keyword>
<accession>Q2FZ55</accession>
<protein>
    <recommendedName>
        <fullName evidence="1">Phosphate acyltransferase</fullName>
        <ecNumber evidence="1">2.3.1.274</ecNumber>
    </recommendedName>
    <alternativeName>
        <fullName evidence="1">Acyl-ACP phosphotransacylase</fullName>
    </alternativeName>
    <alternativeName>
        <fullName evidence="1">Acyl-[acyl-carrier-protein]--phosphate acyltransferase</fullName>
    </alternativeName>
    <alternativeName>
        <fullName evidence="1">Phosphate-acyl-ACP acyltransferase</fullName>
    </alternativeName>
</protein>
<feature type="chain" id="PRO_1000001838" description="Phosphate acyltransferase">
    <location>
        <begin position="1"/>
        <end position="328"/>
    </location>
</feature>
<gene>
    <name evidence="1" type="primary">plsX</name>
    <name type="ordered locus">SAOUHSC_01197</name>
</gene>
<evidence type="ECO:0000255" key="1">
    <source>
        <dbReference type="HAMAP-Rule" id="MF_00019"/>
    </source>
</evidence>
<name>PLSX_STAA8</name>
<proteinExistence type="inferred from homology"/>
<organism>
    <name type="scientific">Staphylococcus aureus (strain NCTC 8325 / PS 47)</name>
    <dbReference type="NCBI Taxonomy" id="93061"/>
    <lineage>
        <taxon>Bacteria</taxon>
        <taxon>Bacillati</taxon>
        <taxon>Bacillota</taxon>
        <taxon>Bacilli</taxon>
        <taxon>Bacillales</taxon>
        <taxon>Staphylococcaceae</taxon>
        <taxon>Staphylococcus</taxon>
    </lineage>
</organism>
<comment type="function">
    <text evidence="1">Catalyzes the reversible formation of acyl-phosphate (acyl-PO(4)) from acyl-[acyl-carrier-protein] (acyl-ACP). This enzyme utilizes acyl-ACP as fatty acyl donor, but not acyl-CoA.</text>
</comment>
<comment type="catalytic activity">
    <reaction evidence="1">
        <text>a fatty acyl-[ACP] + phosphate = an acyl phosphate + holo-[ACP]</text>
        <dbReference type="Rhea" id="RHEA:42292"/>
        <dbReference type="Rhea" id="RHEA-COMP:9685"/>
        <dbReference type="Rhea" id="RHEA-COMP:14125"/>
        <dbReference type="ChEBI" id="CHEBI:43474"/>
        <dbReference type="ChEBI" id="CHEBI:59918"/>
        <dbReference type="ChEBI" id="CHEBI:64479"/>
        <dbReference type="ChEBI" id="CHEBI:138651"/>
        <dbReference type="EC" id="2.3.1.274"/>
    </reaction>
</comment>
<comment type="pathway">
    <text evidence="1">Lipid metabolism; phospholipid metabolism.</text>
</comment>
<comment type="subunit">
    <text evidence="1">Homodimer. Probably interacts with PlsY.</text>
</comment>
<comment type="subcellular location">
    <subcellularLocation>
        <location evidence="1">Cytoplasm</location>
    </subcellularLocation>
    <text evidence="1">Associated with the membrane possibly through PlsY.</text>
</comment>
<comment type="similarity">
    <text evidence="1">Belongs to the PlsX family.</text>
</comment>
<dbReference type="EC" id="2.3.1.274" evidence="1"/>
<dbReference type="EMBL" id="CP000253">
    <property type="protein sequence ID" value="ABD30303.1"/>
    <property type="molecule type" value="Genomic_DNA"/>
</dbReference>
<dbReference type="RefSeq" id="WP_000239744.1">
    <property type="nucleotide sequence ID" value="NZ_LS483365.1"/>
</dbReference>
<dbReference type="RefSeq" id="YP_499735.1">
    <property type="nucleotide sequence ID" value="NC_007795.1"/>
</dbReference>
<dbReference type="SMR" id="Q2FZ55"/>
<dbReference type="STRING" id="93061.SAOUHSC_01197"/>
<dbReference type="PaxDb" id="1280-SAXN108_1229"/>
<dbReference type="GeneID" id="3919329"/>
<dbReference type="KEGG" id="sao:SAOUHSC_01197"/>
<dbReference type="PATRIC" id="fig|93061.5.peg.1099"/>
<dbReference type="eggNOG" id="COG0416">
    <property type="taxonomic scope" value="Bacteria"/>
</dbReference>
<dbReference type="HOGENOM" id="CLU_039379_1_1_9"/>
<dbReference type="OrthoDB" id="9806408at2"/>
<dbReference type="UniPathway" id="UPA00085"/>
<dbReference type="PRO" id="PR:Q2FZ55"/>
<dbReference type="Proteomes" id="UP000008816">
    <property type="component" value="Chromosome"/>
</dbReference>
<dbReference type="GO" id="GO:0005737">
    <property type="term" value="C:cytoplasm"/>
    <property type="evidence" value="ECO:0007669"/>
    <property type="project" value="UniProtKB-SubCell"/>
</dbReference>
<dbReference type="GO" id="GO:0043811">
    <property type="term" value="F:phosphate:acyl-[acyl carrier protein] acyltransferase activity"/>
    <property type="evidence" value="ECO:0007669"/>
    <property type="project" value="UniProtKB-UniRule"/>
</dbReference>
<dbReference type="GO" id="GO:0006633">
    <property type="term" value="P:fatty acid biosynthetic process"/>
    <property type="evidence" value="ECO:0007669"/>
    <property type="project" value="UniProtKB-UniRule"/>
</dbReference>
<dbReference type="GO" id="GO:0008654">
    <property type="term" value="P:phospholipid biosynthetic process"/>
    <property type="evidence" value="ECO:0007669"/>
    <property type="project" value="UniProtKB-KW"/>
</dbReference>
<dbReference type="Gene3D" id="3.40.718.10">
    <property type="entry name" value="Isopropylmalate Dehydrogenase"/>
    <property type="match status" value="1"/>
</dbReference>
<dbReference type="HAMAP" id="MF_00019">
    <property type="entry name" value="PlsX"/>
    <property type="match status" value="1"/>
</dbReference>
<dbReference type="InterPro" id="IPR003664">
    <property type="entry name" value="FA_synthesis"/>
</dbReference>
<dbReference type="InterPro" id="IPR012281">
    <property type="entry name" value="Phospholipid_synth_PlsX-like"/>
</dbReference>
<dbReference type="NCBIfam" id="TIGR00182">
    <property type="entry name" value="plsX"/>
    <property type="match status" value="1"/>
</dbReference>
<dbReference type="PANTHER" id="PTHR30100">
    <property type="entry name" value="FATTY ACID/PHOSPHOLIPID SYNTHESIS PROTEIN PLSX"/>
    <property type="match status" value="1"/>
</dbReference>
<dbReference type="PANTHER" id="PTHR30100:SF1">
    <property type="entry name" value="PHOSPHATE ACYLTRANSFERASE"/>
    <property type="match status" value="1"/>
</dbReference>
<dbReference type="Pfam" id="PF02504">
    <property type="entry name" value="FA_synthesis"/>
    <property type="match status" value="1"/>
</dbReference>
<dbReference type="PIRSF" id="PIRSF002465">
    <property type="entry name" value="Phsphlp_syn_PlsX"/>
    <property type="match status" value="1"/>
</dbReference>
<dbReference type="SUPFAM" id="SSF53659">
    <property type="entry name" value="Isocitrate/Isopropylmalate dehydrogenase-like"/>
    <property type="match status" value="1"/>
</dbReference>
<reference key="1">
    <citation type="book" date="2006" name="Gram positive pathogens, 2nd edition">
        <title>The Staphylococcus aureus NCTC 8325 genome.</title>
        <editorList>
            <person name="Fischetti V."/>
            <person name="Novick R."/>
            <person name="Ferretti J."/>
            <person name="Portnoy D."/>
            <person name="Rood J."/>
        </editorList>
        <authorList>
            <person name="Gillaspy A.F."/>
            <person name="Worrell V."/>
            <person name="Orvis J."/>
            <person name="Roe B.A."/>
            <person name="Dyer D.W."/>
            <person name="Iandolo J.J."/>
        </authorList>
    </citation>
    <scope>NUCLEOTIDE SEQUENCE [LARGE SCALE GENOMIC DNA]</scope>
    <source>
        <strain>NCTC 8325 / PS 47</strain>
    </source>
</reference>
<sequence>MVKLAIDMMGGDNAPDIVLEAVQKAVEDFKDLEIILFGDEKKYNLNHERIEFRHCSEKIEMEDEPVRAIKRKKDSSMVKMAEAVKSGEADGCVSAGNTGALMSAGLFIVGRIKGVARPALVVTLPTIDGKGFVFLDVGANADAKPEHLLQYAQLGDIYAQKIRGIDNPKISLLNIGTEPAKGNSLTKKSYELLNHDHSLNFVGNIEAKTLMDGDTDVVVTDGYTGNMVLKNLEGTAKSIGKMLKDTIMSSTKNKLAGAILKKDLAEFAKKMDYSEYGGSVLLGLEGTVVKAHGSSNAKAFYSAIRQAKIAGEQNIVQTMKETVGESNE</sequence>